<sequence>MSENTIYSGLKQLGSHTDIPLTPEEAVLERVANPQEGTPYCVRFTAPEFTSLCPMTGQPDFAHLVIDYVPGKWLVESKSLKLFLFSFRNHGAFHEDCTVTIGKRLVDLLEPEWLRIGGYWYPRGGIPIDVFYQTGAAPLNVWIPEQGVANYRGRG</sequence>
<reference key="1">
    <citation type="journal article" date="2002" name="Proc. Natl. Acad. Sci. U.S.A.">
        <title>The Brucella suis genome reveals fundamental similarities between animal and plant pathogens and symbionts.</title>
        <authorList>
            <person name="Paulsen I.T."/>
            <person name="Seshadri R."/>
            <person name="Nelson K.E."/>
            <person name="Eisen J.A."/>
            <person name="Heidelberg J.F."/>
            <person name="Read T.D."/>
            <person name="Dodson R.J."/>
            <person name="Umayam L.A."/>
            <person name="Brinkac L.M."/>
            <person name="Beanan M.J."/>
            <person name="Daugherty S.C."/>
            <person name="DeBoy R.T."/>
            <person name="Durkin A.S."/>
            <person name="Kolonay J.F."/>
            <person name="Madupu R."/>
            <person name="Nelson W.C."/>
            <person name="Ayodeji B."/>
            <person name="Kraul M."/>
            <person name="Shetty J."/>
            <person name="Malek J.A."/>
            <person name="Van Aken S.E."/>
            <person name="Riedmuller S."/>
            <person name="Tettelin H."/>
            <person name="Gill S.R."/>
            <person name="White O."/>
            <person name="Salzberg S.L."/>
            <person name="Hoover D.L."/>
            <person name="Lindler L.E."/>
            <person name="Halling S.M."/>
            <person name="Boyle S.M."/>
            <person name="Fraser C.M."/>
        </authorList>
    </citation>
    <scope>NUCLEOTIDE SEQUENCE [LARGE SCALE GENOMIC DNA]</scope>
    <source>
        <strain>1330</strain>
    </source>
</reference>
<reference key="2">
    <citation type="journal article" date="2011" name="J. Bacteriol.">
        <title>Revised genome sequence of Brucella suis 1330.</title>
        <authorList>
            <person name="Tae H."/>
            <person name="Shallom S."/>
            <person name="Settlage R."/>
            <person name="Preston D."/>
            <person name="Adams L.G."/>
            <person name="Garner H.R."/>
        </authorList>
    </citation>
    <scope>NUCLEOTIDE SEQUENCE [LARGE SCALE GENOMIC DNA]</scope>
    <source>
        <strain>1330</strain>
    </source>
</reference>
<evidence type="ECO:0000255" key="1">
    <source>
        <dbReference type="HAMAP-Rule" id="MF_00818"/>
    </source>
</evidence>
<name>QUEF_BRUSU</name>
<feature type="chain" id="PRO_0000162966" description="NADPH-dependent 7-cyano-7-deazaguanine reductase">
    <location>
        <begin position="1"/>
        <end position="155"/>
    </location>
</feature>
<feature type="active site" description="Thioimide intermediate" evidence="1">
    <location>
        <position position="53"/>
    </location>
</feature>
<feature type="active site" description="Proton donor" evidence="1">
    <location>
        <position position="60"/>
    </location>
</feature>
<feature type="binding site" evidence="1">
    <location>
        <begin position="75"/>
        <end position="77"/>
    </location>
    <ligand>
        <name>substrate</name>
    </ligand>
</feature>
<feature type="binding site" evidence="1">
    <location>
        <begin position="94"/>
        <end position="95"/>
    </location>
    <ligand>
        <name>substrate</name>
    </ligand>
</feature>
<organism>
    <name type="scientific">Brucella suis biovar 1 (strain 1330)</name>
    <dbReference type="NCBI Taxonomy" id="204722"/>
    <lineage>
        <taxon>Bacteria</taxon>
        <taxon>Pseudomonadati</taxon>
        <taxon>Pseudomonadota</taxon>
        <taxon>Alphaproteobacteria</taxon>
        <taxon>Hyphomicrobiales</taxon>
        <taxon>Brucellaceae</taxon>
        <taxon>Brucella/Ochrobactrum group</taxon>
        <taxon>Brucella</taxon>
    </lineage>
</organism>
<keyword id="KW-0963">Cytoplasm</keyword>
<keyword id="KW-0521">NADP</keyword>
<keyword id="KW-0560">Oxidoreductase</keyword>
<keyword id="KW-0671">Queuosine biosynthesis</keyword>
<protein>
    <recommendedName>
        <fullName evidence="1">NADPH-dependent 7-cyano-7-deazaguanine reductase</fullName>
        <ecNumber evidence="1">1.7.1.13</ecNumber>
    </recommendedName>
    <alternativeName>
        <fullName evidence="1">7-cyano-7-carbaguanine reductase</fullName>
    </alternativeName>
    <alternativeName>
        <fullName evidence="1">NADPH-dependent nitrile oxidoreductase</fullName>
    </alternativeName>
    <alternativeName>
        <fullName evidence="1">PreQ(0) reductase</fullName>
    </alternativeName>
</protein>
<accession>Q8G0B6</accession>
<accession>G0KAA5</accession>
<dbReference type="EC" id="1.7.1.13" evidence="1"/>
<dbReference type="EMBL" id="AE014291">
    <property type="protein sequence ID" value="AAN30103.1"/>
    <property type="molecule type" value="Genomic_DNA"/>
</dbReference>
<dbReference type="EMBL" id="CP002997">
    <property type="protein sequence ID" value="AEM18521.1"/>
    <property type="molecule type" value="Genomic_DNA"/>
</dbReference>
<dbReference type="RefSeq" id="WP_004688441.1">
    <property type="nucleotide sequence ID" value="NZ_KN046804.1"/>
</dbReference>
<dbReference type="SMR" id="Q8G0B6"/>
<dbReference type="GeneID" id="55590862"/>
<dbReference type="KEGG" id="bms:BR1183"/>
<dbReference type="KEGG" id="bsi:BS1330_I1179"/>
<dbReference type="PATRIC" id="fig|204722.21.peg.2296"/>
<dbReference type="HOGENOM" id="CLU_102489_0_1_5"/>
<dbReference type="PhylomeDB" id="Q8G0B6"/>
<dbReference type="UniPathway" id="UPA00392"/>
<dbReference type="Proteomes" id="UP000007104">
    <property type="component" value="Chromosome I"/>
</dbReference>
<dbReference type="GO" id="GO:0005737">
    <property type="term" value="C:cytoplasm"/>
    <property type="evidence" value="ECO:0007669"/>
    <property type="project" value="UniProtKB-SubCell"/>
</dbReference>
<dbReference type="GO" id="GO:0033739">
    <property type="term" value="F:preQ1 synthase activity"/>
    <property type="evidence" value="ECO:0007669"/>
    <property type="project" value="UniProtKB-UniRule"/>
</dbReference>
<dbReference type="GO" id="GO:0008616">
    <property type="term" value="P:queuosine biosynthetic process"/>
    <property type="evidence" value="ECO:0007669"/>
    <property type="project" value="UniProtKB-UniRule"/>
</dbReference>
<dbReference type="GO" id="GO:0006400">
    <property type="term" value="P:tRNA modification"/>
    <property type="evidence" value="ECO:0007669"/>
    <property type="project" value="UniProtKB-UniRule"/>
</dbReference>
<dbReference type="Gene3D" id="3.30.1130.10">
    <property type="match status" value="1"/>
</dbReference>
<dbReference type="HAMAP" id="MF_00818">
    <property type="entry name" value="QueF_type1"/>
    <property type="match status" value="1"/>
</dbReference>
<dbReference type="InterPro" id="IPR043133">
    <property type="entry name" value="GTP-CH-I_C/QueF"/>
</dbReference>
<dbReference type="InterPro" id="IPR050084">
    <property type="entry name" value="NADPH_dep_7-cyano-7-deazaG_red"/>
</dbReference>
<dbReference type="InterPro" id="IPR029500">
    <property type="entry name" value="QueF"/>
</dbReference>
<dbReference type="InterPro" id="IPR016856">
    <property type="entry name" value="QueF_type1"/>
</dbReference>
<dbReference type="NCBIfam" id="TIGR03139">
    <property type="entry name" value="QueF-II"/>
    <property type="match status" value="1"/>
</dbReference>
<dbReference type="PANTHER" id="PTHR34354">
    <property type="entry name" value="NADPH-DEPENDENT 7-CYANO-7-DEAZAGUANINE REDUCTASE"/>
    <property type="match status" value="1"/>
</dbReference>
<dbReference type="PANTHER" id="PTHR34354:SF1">
    <property type="entry name" value="NADPH-DEPENDENT 7-CYANO-7-DEAZAGUANINE REDUCTASE"/>
    <property type="match status" value="1"/>
</dbReference>
<dbReference type="Pfam" id="PF14489">
    <property type="entry name" value="QueF"/>
    <property type="match status" value="1"/>
</dbReference>
<dbReference type="SUPFAM" id="SSF55620">
    <property type="entry name" value="Tetrahydrobiopterin biosynthesis enzymes-like"/>
    <property type="match status" value="1"/>
</dbReference>
<proteinExistence type="inferred from homology"/>
<comment type="function">
    <text evidence="1">Catalyzes the NADPH-dependent reduction of 7-cyano-7-deazaguanine (preQ0) to 7-aminomethyl-7-deazaguanine (preQ1).</text>
</comment>
<comment type="catalytic activity">
    <reaction evidence="1">
        <text>7-aminomethyl-7-carbaguanine + 2 NADP(+) = 7-cyano-7-deazaguanine + 2 NADPH + 3 H(+)</text>
        <dbReference type="Rhea" id="RHEA:13409"/>
        <dbReference type="ChEBI" id="CHEBI:15378"/>
        <dbReference type="ChEBI" id="CHEBI:45075"/>
        <dbReference type="ChEBI" id="CHEBI:57783"/>
        <dbReference type="ChEBI" id="CHEBI:58349"/>
        <dbReference type="ChEBI" id="CHEBI:58703"/>
        <dbReference type="EC" id="1.7.1.13"/>
    </reaction>
</comment>
<comment type="pathway">
    <text evidence="1">tRNA modification; tRNA-queuosine biosynthesis.</text>
</comment>
<comment type="subcellular location">
    <subcellularLocation>
        <location evidence="1">Cytoplasm</location>
    </subcellularLocation>
</comment>
<comment type="similarity">
    <text evidence="1">Belongs to the GTP cyclohydrolase I family. QueF type 1 subfamily.</text>
</comment>
<gene>
    <name evidence="1" type="primary">queF</name>
    <name type="ordered locus">BR1183</name>
    <name type="ordered locus">BS1330_I1179</name>
</gene>